<evidence type="ECO:0000305" key="1"/>
<dbReference type="EC" id="2.3.1.-"/>
<dbReference type="EMBL" id="U03041">
    <property type="protein sequence ID" value="AAC31635.1"/>
    <property type="molecule type" value="Genomic_DNA"/>
</dbReference>
<dbReference type="EMBL" id="U09876">
    <property type="protein sequence ID" value="AAB88406.1"/>
    <property type="molecule type" value="Genomic_DNA"/>
</dbReference>
<dbReference type="EMBL" id="U00096">
    <property type="protein sequence ID" value="AAC75094.1"/>
    <property type="molecule type" value="Genomic_DNA"/>
</dbReference>
<dbReference type="EMBL" id="AP009048">
    <property type="protein sequence ID" value="BAA15875.1"/>
    <property type="molecule type" value="Genomic_DNA"/>
</dbReference>
<dbReference type="PIR" id="H64968">
    <property type="entry name" value="H64968"/>
</dbReference>
<dbReference type="RefSeq" id="NP_416537.1">
    <property type="nucleotide sequence ID" value="NC_000913.3"/>
</dbReference>
<dbReference type="RefSeq" id="WP_000601187.1">
    <property type="nucleotide sequence ID" value="NZ_LN832404.1"/>
</dbReference>
<dbReference type="SMR" id="P37750"/>
<dbReference type="BioGRID" id="4261351">
    <property type="interactions" value="126"/>
</dbReference>
<dbReference type="DIP" id="DIP-11115N"/>
<dbReference type="FunCoup" id="P37750">
    <property type="interactions" value="65"/>
</dbReference>
<dbReference type="IntAct" id="P37750">
    <property type="interactions" value="7"/>
</dbReference>
<dbReference type="STRING" id="511145.b2033"/>
<dbReference type="jPOST" id="P37750"/>
<dbReference type="PaxDb" id="511145-b2033"/>
<dbReference type="EnsemblBacteria" id="AAC75094">
    <property type="protein sequence ID" value="AAC75094"/>
    <property type="gene ID" value="b2033"/>
</dbReference>
<dbReference type="GeneID" id="946556"/>
<dbReference type="KEGG" id="ecj:JW2018"/>
<dbReference type="KEGG" id="eco:b2033"/>
<dbReference type="KEGG" id="ecoc:C3026_11455"/>
<dbReference type="PATRIC" id="fig|1411691.4.peg.218"/>
<dbReference type="EchoBASE" id="EB1927"/>
<dbReference type="eggNOG" id="COG0110">
    <property type="taxonomic scope" value="Bacteria"/>
</dbReference>
<dbReference type="HOGENOM" id="CLU_051638_7_0_6"/>
<dbReference type="InParanoid" id="P37750"/>
<dbReference type="OMA" id="QLNDYVH"/>
<dbReference type="OrthoDB" id="9815592at2"/>
<dbReference type="PhylomeDB" id="P37750"/>
<dbReference type="BioCyc" id="EcoCyc:EG11984-MONOMER"/>
<dbReference type="UniPathway" id="UPA00030"/>
<dbReference type="PRO" id="PR:P37750"/>
<dbReference type="Proteomes" id="UP000000625">
    <property type="component" value="Chromosome"/>
</dbReference>
<dbReference type="GO" id="GO:0005829">
    <property type="term" value="C:cytosol"/>
    <property type="evidence" value="ECO:0000314"/>
    <property type="project" value="EcoCyc"/>
</dbReference>
<dbReference type="GO" id="GO:0016746">
    <property type="term" value="F:acyltransferase activity"/>
    <property type="evidence" value="ECO:0007669"/>
    <property type="project" value="UniProtKB-KW"/>
</dbReference>
<dbReference type="GO" id="GO:0009103">
    <property type="term" value="P:lipopolysaccharide biosynthetic process"/>
    <property type="evidence" value="ECO:0007669"/>
    <property type="project" value="UniProtKB-UniPathway"/>
</dbReference>
<dbReference type="CDD" id="cd04647">
    <property type="entry name" value="LbH_MAT_like"/>
    <property type="match status" value="1"/>
</dbReference>
<dbReference type="Gene3D" id="2.160.10.10">
    <property type="entry name" value="Hexapeptide repeat proteins"/>
    <property type="match status" value="1"/>
</dbReference>
<dbReference type="InterPro" id="IPR001451">
    <property type="entry name" value="Hexapep"/>
</dbReference>
<dbReference type="InterPro" id="IPR051159">
    <property type="entry name" value="Hexapeptide_acetyltransf"/>
</dbReference>
<dbReference type="InterPro" id="IPR011004">
    <property type="entry name" value="Trimer_LpxA-like_sf"/>
</dbReference>
<dbReference type="NCBIfam" id="NF007240">
    <property type="entry name" value="PRK09677.1"/>
    <property type="match status" value="1"/>
</dbReference>
<dbReference type="PANTHER" id="PTHR23416:SF78">
    <property type="entry name" value="LIPOPOLYSACCHARIDE BIOSYNTHESIS O-ACETYL TRANSFERASE WBBJ-RELATED"/>
    <property type="match status" value="1"/>
</dbReference>
<dbReference type="PANTHER" id="PTHR23416">
    <property type="entry name" value="SIALIC ACID SYNTHASE-RELATED"/>
    <property type="match status" value="1"/>
</dbReference>
<dbReference type="Pfam" id="PF00132">
    <property type="entry name" value="Hexapep"/>
    <property type="match status" value="1"/>
</dbReference>
<dbReference type="SUPFAM" id="SSF51161">
    <property type="entry name" value="Trimeric LpxA-like enzymes"/>
    <property type="match status" value="1"/>
</dbReference>
<proteinExistence type="inferred from homology"/>
<reference key="1">
    <citation type="journal article" date="1994" name="J. Bacteriol.">
        <title>Genetic analysis of the O-specific lipopolysaccharide biosynthesis region (rfb) of Escherichia coli K-12 W3110: identification of genes that confer group 6 specificity to Shigella flexneri serotypes Y and 4a.</title>
        <authorList>
            <person name="Yao Z."/>
            <person name="Valvano M.A."/>
        </authorList>
    </citation>
    <scope>NUCLEOTIDE SEQUENCE [GENOMIC DNA]</scope>
    <source>
        <strain>K12 / W3110 / ATCC 27325 / DSM 5911</strain>
    </source>
</reference>
<reference key="2">
    <citation type="journal article" date="1994" name="J. Bacteriol.">
        <title>Structure of the O antigen of Escherichia coli K-12 and the sequence of its rfb gene cluster.</title>
        <authorList>
            <person name="Stevenson G."/>
            <person name="Neal B."/>
            <person name="Liu D."/>
            <person name="Hobbs M."/>
            <person name="Packer N.H."/>
            <person name="Batley M."/>
            <person name="Redmond J.W."/>
            <person name="Lindquist L."/>
            <person name="Reeves P.R."/>
        </authorList>
    </citation>
    <scope>NUCLEOTIDE SEQUENCE [GENOMIC DNA]</scope>
    <source>
        <strain>K12 / WG1</strain>
    </source>
</reference>
<reference key="3">
    <citation type="submission" date="1997-12" db="EMBL/GenBank/DDBJ databases">
        <authorList>
            <person name="Stevenson G."/>
        </authorList>
    </citation>
    <scope>SEQUENCE REVISION TO 168-176 AND 187-189</scope>
    <source>
        <strain>K12 / WG1</strain>
    </source>
</reference>
<reference key="4">
    <citation type="journal article" date="1996" name="DNA Res.">
        <title>A 460-kb DNA sequence of the Escherichia coli K-12 genome corresponding to the 40.1-50.0 min region on the linkage map.</title>
        <authorList>
            <person name="Itoh T."/>
            <person name="Aiba H."/>
            <person name="Baba T."/>
            <person name="Fujita K."/>
            <person name="Hayashi K."/>
            <person name="Inada T."/>
            <person name="Isono K."/>
            <person name="Kasai H."/>
            <person name="Kimura S."/>
            <person name="Kitakawa M."/>
            <person name="Kitagawa M."/>
            <person name="Makino K."/>
            <person name="Miki T."/>
            <person name="Mizobuchi K."/>
            <person name="Mori H."/>
            <person name="Mori T."/>
            <person name="Motomura K."/>
            <person name="Nakade S."/>
            <person name="Nakamura Y."/>
            <person name="Nashimoto H."/>
            <person name="Nishio Y."/>
            <person name="Oshima T."/>
            <person name="Saito N."/>
            <person name="Sampei G."/>
            <person name="Seki Y."/>
            <person name="Sivasundaram S."/>
            <person name="Tagami H."/>
            <person name="Takeda J."/>
            <person name="Takemoto K."/>
            <person name="Wada C."/>
            <person name="Yamamoto Y."/>
            <person name="Horiuchi T."/>
        </authorList>
    </citation>
    <scope>NUCLEOTIDE SEQUENCE [LARGE SCALE GENOMIC DNA]</scope>
    <source>
        <strain>K12 / W3110 / ATCC 27325 / DSM 5911</strain>
    </source>
</reference>
<reference key="5">
    <citation type="journal article" date="1997" name="Science">
        <title>The complete genome sequence of Escherichia coli K-12.</title>
        <authorList>
            <person name="Blattner F.R."/>
            <person name="Plunkett G. III"/>
            <person name="Bloch C.A."/>
            <person name="Perna N.T."/>
            <person name="Burland V."/>
            <person name="Riley M."/>
            <person name="Collado-Vides J."/>
            <person name="Glasner J.D."/>
            <person name="Rode C.K."/>
            <person name="Mayhew G.F."/>
            <person name="Gregor J."/>
            <person name="Davis N.W."/>
            <person name="Kirkpatrick H.A."/>
            <person name="Goeden M.A."/>
            <person name="Rose D.J."/>
            <person name="Mau B."/>
            <person name="Shao Y."/>
        </authorList>
    </citation>
    <scope>NUCLEOTIDE SEQUENCE [LARGE SCALE GENOMIC DNA]</scope>
    <source>
        <strain>K12 / MG1655 / ATCC 47076</strain>
    </source>
</reference>
<reference key="6">
    <citation type="journal article" date="2006" name="Mol. Syst. Biol.">
        <title>Highly accurate genome sequences of Escherichia coli K-12 strains MG1655 and W3110.</title>
        <authorList>
            <person name="Hayashi K."/>
            <person name="Morooka N."/>
            <person name="Yamamoto Y."/>
            <person name="Fujita K."/>
            <person name="Isono K."/>
            <person name="Choi S."/>
            <person name="Ohtsubo E."/>
            <person name="Baba T."/>
            <person name="Wanner B.L."/>
            <person name="Mori H."/>
            <person name="Horiuchi T."/>
        </authorList>
    </citation>
    <scope>NUCLEOTIDE SEQUENCE [LARGE SCALE GENOMIC DNA]</scope>
    <source>
        <strain>K12 / W3110 / ATCC 27325 / DSM 5911</strain>
    </source>
</reference>
<gene>
    <name type="primary">wbbJ</name>
    <name type="synonym">yefH</name>
    <name type="ordered locus">b2033</name>
    <name type="ordered locus">JW2018</name>
</gene>
<comment type="function">
    <text>Putative O-acetyltransferase that transfers an O-acetyl group to the O antigen.</text>
</comment>
<comment type="pathway">
    <text>Bacterial outer membrane biogenesis; lipopolysaccharide biosynthesis.</text>
</comment>
<comment type="similarity">
    <text evidence="1">Belongs to the transferase hexapeptide repeat family.</text>
</comment>
<organism>
    <name type="scientific">Escherichia coli (strain K12)</name>
    <dbReference type="NCBI Taxonomy" id="83333"/>
    <lineage>
        <taxon>Bacteria</taxon>
        <taxon>Pseudomonadati</taxon>
        <taxon>Pseudomonadota</taxon>
        <taxon>Gammaproteobacteria</taxon>
        <taxon>Enterobacterales</taxon>
        <taxon>Enterobacteriaceae</taxon>
        <taxon>Escherichia</taxon>
    </lineage>
</organism>
<accession>P37750</accession>
<accession>P76375</accession>
<name>WBBJ_ECOLI</name>
<protein>
    <recommendedName>
        <fullName>Putative lipopolysaccharide biosynthesis O-acetyl transferase WbbJ</fullName>
        <ecNumber>2.3.1.-</ecNumber>
    </recommendedName>
</protein>
<keyword id="KW-0012">Acyltransferase</keyword>
<keyword id="KW-0448">Lipopolysaccharide biosynthesis</keyword>
<keyword id="KW-1185">Reference proteome</keyword>
<keyword id="KW-0677">Repeat</keyword>
<keyword id="KW-0808">Transferase</keyword>
<feature type="chain" id="PRO_0000068738" description="Putative lipopolysaccharide biosynthesis O-acetyl transferase WbbJ">
    <location>
        <begin position="1"/>
        <end position="196"/>
    </location>
</feature>
<feature type="sequence conflict" description="In Ref. 1; AAC31635." evidence="1" ref="1">
    <original>SIPENTVIA</original>
    <variation>LFRKYCHC</variation>
    <location>
        <begin position="168"/>
        <end position="176"/>
    </location>
</feature>
<feature type="sequence conflict" description="In Ref. 1; AAC31635." evidence="1" ref="1">
    <original>NHE</original>
    <variation>IMR</variation>
    <location>
        <begin position="187"/>
        <end position="189"/>
    </location>
</feature>
<sequence>MILKLAKRYGLCGFIRLVRDVLLTRVFYRNCRIIRFPCYIRNDGSINFGENFTSGVGLRLDAFGRGVIFFSDNVQVNDYVHIASIESVTIGRDTLIASKVFITDHNHGSFKHSDPMSSPNIPPDMRTLESSAVVIGQRVWLGENVTVLPGTIIGNGVVVGANSVVRGSIPENTVIAGVPAKIIKKYNHETKLWEKA</sequence>